<accession>A2X6S3</accession>
<accession>B8AES3</accession>
<comment type="function">
    <text evidence="1">Functions as ATP-binding component of the Arp2/3 complex which is involved in regulation of actin polymerization and together with an activating nucleation-promoting factor (NPF) mediates the formation of branched actin networks. Seems to contact the pointed end of the daughter actin filament. Regulates the directionality of cell expansion by regulating the actin organization, and thus the microtubules distribution and the fusion of small vacuoles (By similarity).</text>
</comment>
<comment type="subunit">
    <text evidence="1">Component of the Arp2/3 complex.</text>
</comment>
<comment type="subcellular location">
    <subcellularLocation>
        <location evidence="1">Cytoplasm</location>
        <location evidence="1">Cytoskeleton</location>
    </subcellularLocation>
</comment>
<comment type="similarity">
    <text evidence="2">Belongs to the actin family. ARP3 subfamily.</text>
</comment>
<keyword id="KW-0009">Actin-binding</keyword>
<keyword id="KW-0067">ATP-binding</keyword>
<keyword id="KW-0963">Cytoplasm</keyword>
<keyword id="KW-0206">Cytoskeleton</keyword>
<keyword id="KW-0217">Developmental protein</keyword>
<keyword id="KW-0547">Nucleotide-binding</keyword>
<keyword id="KW-1185">Reference proteome</keyword>
<organism>
    <name type="scientific">Oryza sativa subsp. indica</name>
    <name type="common">Rice</name>
    <dbReference type="NCBI Taxonomy" id="39946"/>
    <lineage>
        <taxon>Eukaryota</taxon>
        <taxon>Viridiplantae</taxon>
        <taxon>Streptophyta</taxon>
        <taxon>Embryophyta</taxon>
        <taxon>Tracheophyta</taxon>
        <taxon>Spermatophyta</taxon>
        <taxon>Magnoliopsida</taxon>
        <taxon>Liliopsida</taxon>
        <taxon>Poales</taxon>
        <taxon>Poaceae</taxon>
        <taxon>BOP clade</taxon>
        <taxon>Oryzoideae</taxon>
        <taxon>Oryzeae</taxon>
        <taxon>Oryzinae</taxon>
        <taxon>Oryza</taxon>
        <taxon>Oryza sativa</taxon>
    </lineage>
</organism>
<evidence type="ECO:0000250" key="1"/>
<evidence type="ECO:0000305" key="2"/>
<protein>
    <recommendedName>
        <fullName>Actin-related protein 3</fullName>
    </recommendedName>
</protein>
<name>ARP3_ORYSI</name>
<feature type="chain" id="PRO_0000320527" description="Actin-related protein 3">
    <location>
        <begin position="1"/>
        <end position="428"/>
    </location>
</feature>
<sequence length="428" mass="48060">MDAASRPAVVIDNGTGYTKMGFAGNVEPCFITPTVVAVNDTFAGQTRANTTKGNWMAQHSAGVMADLDFFIGEDALARSRSSNTYNLSYPIHNGQVENWDTMERFWQQCIFNYLRCDPEDHYFLLTESPLTPPETREYTGEIMFETFNVPGLYIACQPVLALAAGYTTTKCEMTGVVVDVGDGATHIVPVADGYVIGSSIRSIPITGKDVTQFIQQLLKERGEHIPPEESFDVARRVKEMYCYTCSDIVKEFNKHDREPNKYIKHWSGIKPKTGAKYTCDIGYERFLGPEIFFHPEIYNNDFTTPLHVVIDKCIQSSPIDTRRALYKNIVLSGGSTMFKDFHRRLQRDLKKIVDARVLASNARLGGDAKAQPIEVNVVSHPIQRYAVWFGGSVLASTAEFYEACHTKAEYEEYGASICRTNPVFKGMY</sequence>
<dbReference type="EMBL" id="CM000127">
    <property type="protein sequence ID" value="EEC73525.1"/>
    <property type="molecule type" value="Genomic_DNA"/>
</dbReference>
<dbReference type="SMR" id="A2X6S3"/>
<dbReference type="STRING" id="39946.A2X6S3"/>
<dbReference type="EnsemblPlants" id="BGIOSGA008544-TA">
    <property type="protein sequence ID" value="BGIOSGA008544-PA"/>
    <property type="gene ID" value="BGIOSGA008544"/>
</dbReference>
<dbReference type="EnsemblPlants" id="OsGoSa_02g0023580.02">
    <property type="protein sequence ID" value="OsGoSa_02g0023580.02"/>
    <property type="gene ID" value="OsGoSa_02g0023580"/>
</dbReference>
<dbReference type="EnsemblPlants" id="OsIR64_02g0023020.01">
    <property type="protein sequence ID" value="OsIR64_02g0023020.01"/>
    <property type="gene ID" value="OsIR64_02g0023020"/>
</dbReference>
<dbReference type="EnsemblPlants" id="OsKYG_02g0023260.01">
    <property type="protein sequence ID" value="OsKYG_02g0023260.01"/>
    <property type="gene ID" value="OsKYG_02g0023260"/>
</dbReference>
<dbReference type="EnsemblPlants" id="OsLaMu_02g0023120.01">
    <property type="protein sequence ID" value="OsLaMu_02g0023120.01"/>
    <property type="gene ID" value="OsLaMu_02g0023120"/>
</dbReference>
<dbReference type="EnsemblPlants" id="OsLima_02g0023410.01">
    <property type="protein sequence ID" value="OsLima_02g0023410.01"/>
    <property type="gene ID" value="OsLima_02g0023410"/>
</dbReference>
<dbReference type="EnsemblPlants" id="OsLiXu_02g0023300.01">
    <property type="protein sequence ID" value="OsLiXu_02g0023300.01"/>
    <property type="gene ID" value="OsLiXu_02g0023300"/>
</dbReference>
<dbReference type="EnsemblPlants" id="OsMH63_02G023640_02">
    <property type="protein sequence ID" value="OsMH63_02G023640_02"/>
    <property type="gene ID" value="OsMH63_02G023640"/>
</dbReference>
<dbReference type="EnsemblPlants" id="OsPr106_02g0023230.01">
    <property type="protein sequence ID" value="OsPr106_02g0023230.01"/>
    <property type="gene ID" value="OsPr106_02g0023230"/>
</dbReference>
<dbReference type="EnsemblPlants" id="OsZS97_02G022980_01">
    <property type="protein sequence ID" value="OsZS97_02G022980_01"/>
    <property type="gene ID" value="OsZS97_02G022980"/>
</dbReference>
<dbReference type="Gramene" id="BGIOSGA008544-TA">
    <property type="protein sequence ID" value="BGIOSGA008544-PA"/>
    <property type="gene ID" value="BGIOSGA008544"/>
</dbReference>
<dbReference type="Gramene" id="OsGoSa_02g0023580.02">
    <property type="protein sequence ID" value="OsGoSa_02g0023580.02"/>
    <property type="gene ID" value="OsGoSa_02g0023580"/>
</dbReference>
<dbReference type="Gramene" id="OsIR64_02g0023020.01">
    <property type="protein sequence ID" value="OsIR64_02g0023020.01"/>
    <property type="gene ID" value="OsIR64_02g0023020"/>
</dbReference>
<dbReference type="Gramene" id="OsKYG_02g0023260.01">
    <property type="protein sequence ID" value="OsKYG_02g0023260.01"/>
    <property type="gene ID" value="OsKYG_02g0023260"/>
</dbReference>
<dbReference type="Gramene" id="OsLaMu_02g0023120.01">
    <property type="protein sequence ID" value="OsLaMu_02g0023120.01"/>
    <property type="gene ID" value="OsLaMu_02g0023120"/>
</dbReference>
<dbReference type="Gramene" id="OsLima_02g0023410.01">
    <property type="protein sequence ID" value="OsLima_02g0023410.01"/>
    <property type="gene ID" value="OsLima_02g0023410"/>
</dbReference>
<dbReference type="Gramene" id="OsLiXu_02g0023300.01">
    <property type="protein sequence ID" value="OsLiXu_02g0023300.01"/>
    <property type="gene ID" value="OsLiXu_02g0023300"/>
</dbReference>
<dbReference type="Gramene" id="OsMH63_02G023640_02">
    <property type="protein sequence ID" value="OsMH63_02G023640_02"/>
    <property type="gene ID" value="OsMH63_02G023640"/>
</dbReference>
<dbReference type="Gramene" id="OsPr106_02g0023230.01">
    <property type="protein sequence ID" value="OsPr106_02g0023230.01"/>
    <property type="gene ID" value="OsPr106_02g0023230"/>
</dbReference>
<dbReference type="Gramene" id="OsZS97_02G022980_01">
    <property type="protein sequence ID" value="OsZS97_02G022980_01"/>
    <property type="gene ID" value="OsZS97_02G022980"/>
</dbReference>
<dbReference type="HOGENOM" id="CLU_027965_3_0_1"/>
<dbReference type="OMA" id="GIHYPIR"/>
<dbReference type="OrthoDB" id="421448at2759"/>
<dbReference type="Proteomes" id="UP000007015">
    <property type="component" value="Chromosome 2"/>
</dbReference>
<dbReference type="GO" id="GO:0005737">
    <property type="term" value="C:cytoplasm"/>
    <property type="evidence" value="ECO:0007669"/>
    <property type="project" value="UniProtKB-KW"/>
</dbReference>
<dbReference type="GO" id="GO:0005856">
    <property type="term" value="C:cytoskeleton"/>
    <property type="evidence" value="ECO:0007669"/>
    <property type="project" value="UniProtKB-SubCell"/>
</dbReference>
<dbReference type="GO" id="GO:0003779">
    <property type="term" value="F:actin binding"/>
    <property type="evidence" value="ECO:0007669"/>
    <property type="project" value="UniProtKB-KW"/>
</dbReference>
<dbReference type="GO" id="GO:0005524">
    <property type="term" value="F:ATP binding"/>
    <property type="evidence" value="ECO:0007669"/>
    <property type="project" value="UniProtKB-KW"/>
</dbReference>
<dbReference type="CDD" id="cd10221">
    <property type="entry name" value="ASKHA_NBD_Arp3-like"/>
    <property type="match status" value="1"/>
</dbReference>
<dbReference type="FunFam" id="3.30.420.40:FF:000029">
    <property type="entry name" value="Actin-related protein 3"/>
    <property type="match status" value="1"/>
</dbReference>
<dbReference type="FunFam" id="3.30.420.40:FF:000315">
    <property type="entry name" value="Actin-related protein 3"/>
    <property type="match status" value="1"/>
</dbReference>
<dbReference type="FunFam" id="3.30.420.40:FF:000803">
    <property type="entry name" value="Actin-related protein 3"/>
    <property type="match status" value="1"/>
</dbReference>
<dbReference type="FunFam" id="3.90.640.10:FF:000006">
    <property type="entry name" value="Actin-related protein 3 (ARP3)"/>
    <property type="match status" value="1"/>
</dbReference>
<dbReference type="Gene3D" id="3.30.420.40">
    <property type="match status" value="2"/>
</dbReference>
<dbReference type="Gene3D" id="3.90.640.10">
    <property type="entry name" value="Actin, Chain A, domain 4"/>
    <property type="match status" value="1"/>
</dbReference>
<dbReference type="InterPro" id="IPR004000">
    <property type="entry name" value="Actin"/>
</dbReference>
<dbReference type="InterPro" id="IPR043129">
    <property type="entry name" value="ATPase_NBD"/>
</dbReference>
<dbReference type="PANTHER" id="PTHR11937">
    <property type="entry name" value="ACTIN"/>
    <property type="match status" value="1"/>
</dbReference>
<dbReference type="Pfam" id="PF00022">
    <property type="entry name" value="Actin"/>
    <property type="match status" value="1"/>
</dbReference>
<dbReference type="SMART" id="SM00268">
    <property type="entry name" value="ACTIN"/>
    <property type="match status" value="1"/>
</dbReference>
<dbReference type="SUPFAM" id="SSF53067">
    <property type="entry name" value="Actin-like ATPase domain"/>
    <property type="match status" value="2"/>
</dbReference>
<gene>
    <name type="primary">ARP3</name>
    <name type="ORF">OsI_07915</name>
</gene>
<proteinExistence type="inferred from homology"/>
<reference key="1">
    <citation type="journal article" date="2005" name="PLoS Biol.">
        <title>The genomes of Oryza sativa: a history of duplications.</title>
        <authorList>
            <person name="Yu J."/>
            <person name="Wang J."/>
            <person name="Lin W."/>
            <person name="Li S."/>
            <person name="Li H."/>
            <person name="Zhou J."/>
            <person name="Ni P."/>
            <person name="Dong W."/>
            <person name="Hu S."/>
            <person name="Zeng C."/>
            <person name="Zhang J."/>
            <person name="Zhang Y."/>
            <person name="Li R."/>
            <person name="Xu Z."/>
            <person name="Li S."/>
            <person name="Li X."/>
            <person name="Zheng H."/>
            <person name="Cong L."/>
            <person name="Lin L."/>
            <person name="Yin J."/>
            <person name="Geng J."/>
            <person name="Li G."/>
            <person name="Shi J."/>
            <person name="Liu J."/>
            <person name="Lv H."/>
            <person name="Li J."/>
            <person name="Wang J."/>
            <person name="Deng Y."/>
            <person name="Ran L."/>
            <person name="Shi X."/>
            <person name="Wang X."/>
            <person name="Wu Q."/>
            <person name="Li C."/>
            <person name="Ren X."/>
            <person name="Wang J."/>
            <person name="Wang X."/>
            <person name="Li D."/>
            <person name="Liu D."/>
            <person name="Zhang X."/>
            <person name="Ji Z."/>
            <person name="Zhao W."/>
            <person name="Sun Y."/>
            <person name="Zhang Z."/>
            <person name="Bao J."/>
            <person name="Han Y."/>
            <person name="Dong L."/>
            <person name="Ji J."/>
            <person name="Chen P."/>
            <person name="Wu S."/>
            <person name="Liu J."/>
            <person name="Xiao Y."/>
            <person name="Bu D."/>
            <person name="Tan J."/>
            <person name="Yang L."/>
            <person name="Ye C."/>
            <person name="Zhang J."/>
            <person name="Xu J."/>
            <person name="Zhou Y."/>
            <person name="Yu Y."/>
            <person name="Zhang B."/>
            <person name="Zhuang S."/>
            <person name="Wei H."/>
            <person name="Liu B."/>
            <person name="Lei M."/>
            <person name="Yu H."/>
            <person name="Li Y."/>
            <person name="Xu H."/>
            <person name="Wei S."/>
            <person name="He X."/>
            <person name="Fang L."/>
            <person name="Zhang Z."/>
            <person name="Zhang Y."/>
            <person name="Huang X."/>
            <person name="Su Z."/>
            <person name="Tong W."/>
            <person name="Li J."/>
            <person name="Tong Z."/>
            <person name="Li S."/>
            <person name="Ye J."/>
            <person name="Wang L."/>
            <person name="Fang L."/>
            <person name="Lei T."/>
            <person name="Chen C.-S."/>
            <person name="Chen H.-C."/>
            <person name="Xu Z."/>
            <person name="Li H."/>
            <person name="Huang H."/>
            <person name="Zhang F."/>
            <person name="Xu H."/>
            <person name="Li N."/>
            <person name="Zhao C."/>
            <person name="Li S."/>
            <person name="Dong L."/>
            <person name="Huang Y."/>
            <person name="Li L."/>
            <person name="Xi Y."/>
            <person name="Qi Q."/>
            <person name="Li W."/>
            <person name="Zhang B."/>
            <person name="Hu W."/>
            <person name="Zhang Y."/>
            <person name="Tian X."/>
            <person name="Jiao Y."/>
            <person name="Liang X."/>
            <person name="Jin J."/>
            <person name="Gao L."/>
            <person name="Zheng W."/>
            <person name="Hao B."/>
            <person name="Liu S.-M."/>
            <person name="Wang W."/>
            <person name="Yuan L."/>
            <person name="Cao M."/>
            <person name="McDermott J."/>
            <person name="Samudrala R."/>
            <person name="Wang J."/>
            <person name="Wong G.K.-S."/>
            <person name="Yang H."/>
        </authorList>
    </citation>
    <scope>NUCLEOTIDE SEQUENCE [LARGE SCALE GENOMIC DNA]</scope>
    <source>
        <strain>cv. 93-11</strain>
    </source>
</reference>
<reference key="2">
    <citation type="journal article" date="2004" name="Trends Plant Sci.">
        <title>Plant actin-related proteins.</title>
        <authorList>
            <person name="Kandasamy M.K."/>
            <person name="Deal R.B."/>
            <person name="McKinney E.C."/>
            <person name="Meagher R.B."/>
        </authorList>
    </citation>
    <scope>REVIEW</scope>
    <scope>GENE FAMILY</scope>
    <scope>NOMENCLATURE</scope>
</reference>